<name>PUS6_YEAST</name>
<keyword id="KW-0963">Cytoplasm</keyword>
<keyword id="KW-0413">Isomerase</keyword>
<keyword id="KW-0496">Mitochondrion</keyword>
<keyword id="KW-1185">Reference proteome</keyword>
<keyword id="KW-0819">tRNA processing</keyword>
<feature type="chain" id="PRO_0000162757" description="tRNA pseudouridine(31) synthase">
    <location>
        <begin position="1"/>
        <end position="404"/>
    </location>
</feature>
<feature type="active site">
    <location>
        <position position="168"/>
    </location>
</feature>
<feature type="mutagenesis site" description="Loss of function." evidence="1">
    <original>D</original>
    <variation>A</variation>
    <location>
        <position position="168"/>
    </location>
</feature>
<evidence type="ECO:0000269" key="1">
    <source>
    </source>
</evidence>
<evidence type="ECO:0000269" key="2">
    <source>
    </source>
</evidence>
<evidence type="ECO:0000305" key="3"/>
<comment type="function">
    <text evidence="1">Catalyzes the formation of pseudouridine at position 31 in the psi GC loop of tRNAS.</text>
</comment>
<comment type="catalytic activity">
    <reaction evidence="1">
        <text>uridine(31) in tRNA = pseudouridine(31) in tRNA</text>
        <dbReference type="Rhea" id="RHEA:42552"/>
        <dbReference type="Rhea" id="RHEA-COMP:10111"/>
        <dbReference type="Rhea" id="RHEA-COMP:10112"/>
        <dbReference type="ChEBI" id="CHEBI:65314"/>
        <dbReference type="ChEBI" id="CHEBI:65315"/>
        <dbReference type="EC" id="5.4.99.42"/>
    </reaction>
</comment>
<comment type="subcellular location">
    <subcellularLocation>
        <location evidence="1">Cytoplasm</location>
    </subcellularLocation>
    <subcellularLocation>
        <location evidence="1">Mitochondrion</location>
    </subcellularLocation>
</comment>
<comment type="miscellaneous">
    <text evidence="2">Present with 377 molecules/cell in log phase SD medium.</text>
</comment>
<comment type="similarity">
    <text evidence="3">Belongs to the pseudouridine synthase RluA family.</text>
</comment>
<proteinExistence type="evidence at protein level"/>
<organism>
    <name type="scientific">Saccharomyces cerevisiae (strain ATCC 204508 / S288c)</name>
    <name type="common">Baker's yeast</name>
    <dbReference type="NCBI Taxonomy" id="559292"/>
    <lineage>
        <taxon>Eukaryota</taxon>
        <taxon>Fungi</taxon>
        <taxon>Dikarya</taxon>
        <taxon>Ascomycota</taxon>
        <taxon>Saccharomycotina</taxon>
        <taxon>Saccharomycetes</taxon>
        <taxon>Saccharomycetales</taxon>
        <taxon>Saccharomycetaceae</taxon>
        <taxon>Saccharomyces</taxon>
    </lineage>
</organism>
<reference key="1">
    <citation type="journal article" date="1997" name="Yeast">
        <title>Sequence analysis of 203 kilobases from Saccharomyces cerevisiae chromosome VII.</title>
        <authorList>
            <person name="Rieger M."/>
            <person name="Brueckner M."/>
            <person name="Schaefer M."/>
            <person name="Mueller-Auer S."/>
        </authorList>
    </citation>
    <scope>NUCLEOTIDE SEQUENCE [GENOMIC DNA]</scope>
    <source>
        <strain>ATCC 204508 / S288c</strain>
    </source>
</reference>
<reference key="2">
    <citation type="journal article" date="1997" name="Nature">
        <title>The nucleotide sequence of Saccharomyces cerevisiae chromosome VII.</title>
        <authorList>
            <person name="Tettelin H."/>
            <person name="Agostoni-Carbone M.L."/>
            <person name="Albermann K."/>
            <person name="Albers M."/>
            <person name="Arroyo J."/>
            <person name="Backes U."/>
            <person name="Barreiros T."/>
            <person name="Bertani I."/>
            <person name="Bjourson A.J."/>
            <person name="Brueckner M."/>
            <person name="Bruschi C.V."/>
            <person name="Carignani G."/>
            <person name="Castagnoli L."/>
            <person name="Cerdan E."/>
            <person name="Clemente M.L."/>
            <person name="Coblenz A."/>
            <person name="Coglievina M."/>
            <person name="Coissac E."/>
            <person name="Defoor E."/>
            <person name="Del Bino S."/>
            <person name="Delius H."/>
            <person name="Delneri D."/>
            <person name="de Wergifosse P."/>
            <person name="Dujon B."/>
            <person name="Durand P."/>
            <person name="Entian K.-D."/>
            <person name="Eraso P."/>
            <person name="Escribano V."/>
            <person name="Fabiani L."/>
            <person name="Fartmann B."/>
            <person name="Feroli F."/>
            <person name="Feuermann M."/>
            <person name="Frontali L."/>
            <person name="Garcia-Gonzalez M."/>
            <person name="Garcia-Saez M.I."/>
            <person name="Goffeau A."/>
            <person name="Guerreiro P."/>
            <person name="Hani J."/>
            <person name="Hansen M."/>
            <person name="Hebling U."/>
            <person name="Hernandez K."/>
            <person name="Heumann K."/>
            <person name="Hilger F."/>
            <person name="Hofmann B."/>
            <person name="Indge K.J."/>
            <person name="James C.M."/>
            <person name="Klima R."/>
            <person name="Koetter P."/>
            <person name="Kramer B."/>
            <person name="Kramer W."/>
            <person name="Lauquin G."/>
            <person name="Leuther H."/>
            <person name="Louis E.J."/>
            <person name="Maillier E."/>
            <person name="Marconi A."/>
            <person name="Martegani E."/>
            <person name="Mazon M.J."/>
            <person name="Mazzoni C."/>
            <person name="McReynolds A.D.K."/>
            <person name="Melchioretto P."/>
            <person name="Mewes H.-W."/>
            <person name="Minenkova O."/>
            <person name="Mueller-Auer S."/>
            <person name="Nawrocki A."/>
            <person name="Netter P."/>
            <person name="Neu R."/>
            <person name="Nombela C."/>
            <person name="Oliver S.G."/>
            <person name="Panzeri L."/>
            <person name="Paoluzi S."/>
            <person name="Plevani P."/>
            <person name="Portetelle D."/>
            <person name="Portillo F."/>
            <person name="Potier S."/>
            <person name="Purnelle B."/>
            <person name="Rieger M."/>
            <person name="Riles L."/>
            <person name="Rinaldi T."/>
            <person name="Robben J."/>
            <person name="Rodrigues-Pousada C."/>
            <person name="Rodriguez-Belmonte E."/>
            <person name="Rodriguez-Torres A.M."/>
            <person name="Rose M."/>
            <person name="Ruzzi M."/>
            <person name="Saliola M."/>
            <person name="Sanchez-Perez M."/>
            <person name="Schaefer B."/>
            <person name="Schaefer M."/>
            <person name="Scharfe M."/>
            <person name="Schmidheini T."/>
            <person name="Schreer A."/>
            <person name="Skala J."/>
            <person name="Souciet J.-L."/>
            <person name="Steensma H.Y."/>
            <person name="Talla E."/>
            <person name="Thierry A."/>
            <person name="Vandenbol M."/>
            <person name="van der Aart Q.J.M."/>
            <person name="Van Dyck L."/>
            <person name="Vanoni M."/>
            <person name="Verhasselt P."/>
            <person name="Voet M."/>
            <person name="Volckaert G."/>
            <person name="Wambutt R."/>
            <person name="Watson M.D."/>
            <person name="Weber N."/>
            <person name="Wedler E."/>
            <person name="Wedler H."/>
            <person name="Wipfli P."/>
            <person name="Wolf K."/>
            <person name="Wright L.F."/>
            <person name="Zaccaria P."/>
            <person name="Zimmermann M."/>
            <person name="Zollner A."/>
            <person name="Kleine K."/>
        </authorList>
    </citation>
    <scope>NUCLEOTIDE SEQUENCE [LARGE SCALE GENOMIC DNA]</scope>
    <source>
        <strain>ATCC 204508 / S288c</strain>
    </source>
</reference>
<reference key="3">
    <citation type="journal article" date="2014" name="G3 (Bethesda)">
        <title>The reference genome sequence of Saccharomyces cerevisiae: Then and now.</title>
        <authorList>
            <person name="Engel S.R."/>
            <person name="Dietrich F.S."/>
            <person name="Fisk D.G."/>
            <person name="Binkley G."/>
            <person name="Balakrishnan R."/>
            <person name="Costanzo M.C."/>
            <person name="Dwight S.S."/>
            <person name="Hitz B.C."/>
            <person name="Karra K."/>
            <person name="Nash R.S."/>
            <person name="Weng S."/>
            <person name="Wong E.D."/>
            <person name="Lloyd P."/>
            <person name="Skrzypek M.S."/>
            <person name="Miyasato S.R."/>
            <person name="Simison M."/>
            <person name="Cherry J.M."/>
        </authorList>
    </citation>
    <scope>GENOME REANNOTATION</scope>
    <source>
        <strain>ATCC 204508 / S288c</strain>
    </source>
</reference>
<reference key="4">
    <citation type="journal article" date="2001" name="J. Biol. Chem.">
        <title>Identification and characterization of the tRNA:Psi 31-synthase (Pus6p) of Saccharomyces cerevisiae.</title>
        <authorList>
            <person name="Ansmant I."/>
            <person name="Motorin Y."/>
            <person name="Massenet S."/>
            <person name="Grosjean H."/>
            <person name="Branlant C."/>
        </authorList>
    </citation>
    <scope>FUNCTION</scope>
    <scope>CATALYTIC ACTIVITY</scope>
    <scope>CHARACTERIZATION</scope>
    <scope>SUBCELLULAR LOCATION</scope>
    <scope>MUTAGENESIS OF ASP-168</scope>
</reference>
<reference key="5">
    <citation type="journal article" date="2003" name="Nature">
        <title>Global analysis of protein expression in yeast.</title>
        <authorList>
            <person name="Ghaemmaghami S."/>
            <person name="Huh W.-K."/>
            <person name="Bower K."/>
            <person name="Howson R.W."/>
            <person name="Belle A."/>
            <person name="Dephoure N."/>
            <person name="O'Shea E.K."/>
            <person name="Weissman J.S."/>
        </authorList>
    </citation>
    <scope>LEVEL OF PROTEIN EXPRESSION [LARGE SCALE ANALYSIS]</scope>
</reference>
<protein>
    <recommendedName>
        <fullName>tRNA pseudouridine(31) synthase</fullName>
        <ecNumber>5.4.99.42</ecNumber>
    </recommendedName>
    <alternativeName>
        <fullName>Pseudouridine synthase 6</fullName>
    </alternativeName>
    <alternativeName>
        <fullName>Pseudouridylate synthase 6</fullName>
    </alternativeName>
    <alternativeName>
        <fullName>Uracil hydrolyase</fullName>
    </alternativeName>
    <alternativeName>
        <fullName>tRNA pseudouridine 31 synthase</fullName>
        <shortName>PSI31 synthase</shortName>
    </alternativeName>
</protein>
<sequence length="404" mass="46816">MSTIKVIEVYTQNGLRKVRPYYNRRSAFVKGRWLGKLLIDVLVSEFKLRPRAYYLDQIRKGTYRLIRDGVPLVPDHLMTTIIKNHDVLETTTHKHEPPVKQWCSQEVEAEDLPGRIAGFNIVFEDESILVIDKPSGIPVHPTGQFYQNTITELLKLHGVDALPCYRLDKITSGLLILAKNSQSAGEIQKSIRSRDMIKIYLARVKGRFPHSELILDNENAAETTFEDTSKVTVEMTPIYSIDPKRQFPVGLSTSKDAITKFYPIRYFSHADETVVACKPITGRTHQIRIHLARLGHPIVNDSVYCSHITKYPERLKFITQFPRWENQQDLDAEELKVRFQKFVDETKNNCRTMETFCPECHTVDLKDPVLSDLELWLHAWKYEEINGKFKFKTDLPKWAQLDNS</sequence>
<accession>P53294</accession>
<accession>D6VUV2</accession>
<dbReference type="EC" id="5.4.99.42"/>
<dbReference type="EMBL" id="Z72954">
    <property type="protein sequence ID" value="CAA97195.1"/>
    <property type="molecule type" value="Genomic_DNA"/>
</dbReference>
<dbReference type="EMBL" id="BK006941">
    <property type="protein sequence ID" value="DAA08263.1"/>
    <property type="molecule type" value="Genomic_DNA"/>
</dbReference>
<dbReference type="PIR" id="S64480">
    <property type="entry name" value="S64480"/>
</dbReference>
<dbReference type="RefSeq" id="NP_011685.3">
    <property type="nucleotide sequence ID" value="NM_001181298.3"/>
</dbReference>
<dbReference type="BioGRID" id="33421">
    <property type="interactions" value="40"/>
</dbReference>
<dbReference type="DIP" id="DIP-5429N"/>
<dbReference type="FunCoup" id="P53294">
    <property type="interactions" value="139"/>
</dbReference>
<dbReference type="STRING" id="4932.YGR169C"/>
<dbReference type="iPTMnet" id="P53294"/>
<dbReference type="PaxDb" id="4932-YGR169C"/>
<dbReference type="PeptideAtlas" id="P53294"/>
<dbReference type="EnsemblFungi" id="YGR169C_mRNA">
    <property type="protein sequence ID" value="YGR169C"/>
    <property type="gene ID" value="YGR169C"/>
</dbReference>
<dbReference type="GeneID" id="853079"/>
<dbReference type="KEGG" id="sce:YGR169C"/>
<dbReference type="AGR" id="SGD:S000003401"/>
<dbReference type="SGD" id="S000003401">
    <property type="gene designation" value="PUS6"/>
</dbReference>
<dbReference type="VEuPathDB" id="FungiDB:YGR169C"/>
<dbReference type="eggNOG" id="KOG1919">
    <property type="taxonomic scope" value="Eukaryota"/>
</dbReference>
<dbReference type="HOGENOM" id="CLU_016902_12_1_1"/>
<dbReference type="InParanoid" id="P53294"/>
<dbReference type="OMA" id="THKHEPP"/>
<dbReference type="OrthoDB" id="424794at2759"/>
<dbReference type="BioCyc" id="MetaCyc:YGR169C-MONOMER"/>
<dbReference type="BioCyc" id="YEAST:YGR169C-MONOMER"/>
<dbReference type="BRENDA" id="5.4.99.42">
    <property type="organism ID" value="984"/>
</dbReference>
<dbReference type="BRENDA" id="5.4.99.B22">
    <property type="organism ID" value="984"/>
</dbReference>
<dbReference type="BioGRID-ORCS" id="853079">
    <property type="hits" value="4 hits in 10 CRISPR screens"/>
</dbReference>
<dbReference type="PRO" id="PR:P53294"/>
<dbReference type="Proteomes" id="UP000002311">
    <property type="component" value="Chromosome VII"/>
</dbReference>
<dbReference type="RNAct" id="P53294">
    <property type="molecule type" value="protein"/>
</dbReference>
<dbReference type="GO" id="GO:0005737">
    <property type="term" value="C:cytoplasm"/>
    <property type="evidence" value="ECO:0000314"/>
    <property type="project" value="SGD"/>
</dbReference>
<dbReference type="GO" id="GO:0005739">
    <property type="term" value="C:mitochondrion"/>
    <property type="evidence" value="ECO:0000314"/>
    <property type="project" value="SGD"/>
</dbReference>
<dbReference type="GO" id="GO:0009982">
    <property type="term" value="F:pseudouridine synthase activity"/>
    <property type="evidence" value="ECO:0000314"/>
    <property type="project" value="SGD"/>
</dbReference>
<dbReference type="GO" id="GO:0003723">
    <property type="term" value="F:RNA binding"/>
    <property type="evidence" value="ECO:0007669"/>
    <property type="project" value="InterPro"/>
</dbReference>
<dbReference type="GO" id="GO:0160152">
    <property type="term" value="F:tRNA pseudouridine(31) synthase activity"/>
    <property type="evidence" value="ECO:0007669"/>
    <property type="project" value="UniProtKB-EC"/>
</dbReference>
<dbReference type="GO" id="GO:0000455">
    <property type="term" value="P:enzyme-directed rRNA pseudouridine synthesis"/>
    <property type="evidence" value="ECO:0000318"/>
    <property type="project" value="GO_Central"/>
</dbReference>
<dbReference type="GO" id="GO:0031119">
    <property type="term" value="P:tRNA pseudouridine synthesis"/>
    <property type="evidence" value="ECO:0000314"/>
    <property type="project" value="SGD"/>
</dbReference>
<dbReference type="CDD" id="cd02557">
    <property type="entry name" value="PseudoU_synth_ScRIB2"/>
    <property type="match status" value="1"/>
</dbReference>
<dbReference type="FunFam" id="3.30.2350.10:FF:000030">
    <property type="entry name" value="Pseudouridine synthase"/>
    <property type="match status" value="1"/>
</dbReference>
<dbReference type="Gene3D" id="3.30.2350.10">
    <property type="entry name" value="Pseudouridine synthase"/>
    <property type="match status" value="1"/>
</dbReference>
<dbReference type="InterPro" id="IPR020103">
    <property type="entry name" value="PsdUridine_synth_cat_dom_sf"/>
</dbReference>
<dbReference type="InterPro" id="IPR006224">
    <property type="entry name" value="PsdUridine_synth_RluA-like_CS"/>
</dbReference>
<dbReference type="InterPro" id="IPR006145">
    <property type="entry name" value="PsdUridine_synth_RsuA/RluA"/>
</dbReference>
<dbReference type="InterPro" id="IPR050188">
    <property type="entry name" value="RluA_PseudoU_synthase"/>
</dbReference>
<dbReference type="PANTHER" id="PTHR21600">
    <property type="entry name" value="MITOCHONDRIAL RNA PSEUDOURIDINE SYNTHASE"/>
    <property type="match status" value="1"/>
</dbReference>
<dbReference type="PANTHER" id="PTHR21600:SF42">
    <property type="entry name" value="TRNA PSEUDOURIDINE(31) SYNTHASE"/>
    <property type="match status" value="1"/>
</dbReference>
<dbReference type="Pfam" id="PF00849">
    <property type="entry name" value="PseudoU_synth_2"/>
    <property type="match status" value="1"/>
</dbReference>
<dbReference type="SUPFAM" id="SSF55120">
    <property type="entry name" value="Pseudouridine synthase"/>
    <property type="match status" value="1"/>
</dbReference>
<dbReference type="PROSITE" id="PS01129">
    <property type="entry name" value="PSI_RLU"/>
    <property type="match status" value="1"/>
</dbReference>
<gene>
    <name type="primary">PUS6</name>
    <name type="ordered locus">YGR169C</name>
</gene>